<dbReference type="EMBL" id="AE017355">
    <property type="protein sequence ID" value="AAT61008.1"/>
    <property type="molecule type" value="Genomic_DNA"/>
</dbReference>
<dbReference type="RefSeq" id="WP_000784593.1">
    <property type="nucleotide sequence ID" value="NC_005957.1"/>
</dbReference>
<dbReference type="RefSeq" id="YP_038739.1">
    <property type="nucleotide sequence ID" value="NC_005957.1"/>
</dbReference>
<dbReference type="KEGG" id="btk:BT9727_4425"/>
<dbReference type="PATRIC" id="fig|281309.8.peg.4713"/>
<dbReference type="HOGENOM" id="CLU_085634_0_0_9"/>
<dbReference type="Proteomes" id="UP000001301">
    <property type="component" value="Chromosome"/>
</dbReference>
<dbReference type="HAMAP" id="MF_01548">
    <property type="entry name" value="UPF0354"/>
    <property type="match status" value="1"/>
</dbReference>
<dbReference type="InterPro" id="IPR010838">
    <property type="entry name" value="DUF1444"/>
</dbReference>
<dbReference type="NCBIfam" id="NF010189">
    <property type="entry name" value="PRK13668.1"/>
    <property type="match status" value="1"/>
</dbReference>
<dbReference type="Pfam" id="PF07285">
    <property type="entry name" value="DUF1444"/>
    <property type="match status" value="1"/>
</dbReference>
<dbReference type="PIRSF" id="PIRSF012562">
    <property type="entry name" value="UCP012562"/>
    <property type="match status" value="1"/>
</dbReference>
<organism>
    <name type="scientific">Bacillus thuringiensis subsp. konkukian (strain 97-27)</name>
    <dbReference type="NCBI Taxonomy" id="281309"/>
    <lineage>
        <taxon>Bacteria</taxon>
        <taxon>Bacillati</taxon>
        <taxon>Bacillota</taxon>
        <taxon>Bacilli</taxon>
        <taxon>Bacillales</taxon>
        <taxon>Bacillaceae</taxon>
        <taxon>Bacillus</taxon>
        <taxon>Bacillus cereus group</taxon>
    </lineage>
</organism>
<protein>
    <recommendedName>
        <fullName evidence="1">UPF0354 protein BT9727_4425</fullName>
    </recommendedName>
</protein>
<comment type="similarity">
    <text evidence="1">Belongs to the UPF0354 family.</text>
</comment>
<accession>Q6HCI7</accession>
<proteinExistence type="inferred from homology"/>
<feature type="chain" id="PRO_0000171101" description="UPF0354 protein BT9727_4425">
    <location>
        <begin position="1"/>
        <end position="270"/>
    </location>
</feature>
<name>Y4425_BACHK</name>
<reference key="1">
    <citation type="journal article" date="2006" name="J. Bacteriol.">
        <title>Pathogenomic sequence analysis of Bacillus cereus and Bacillus thuringiensis isolates closely related to Bacillus anthracis.</title>
        <authorList>
            <person name="Han C.S."/>
            <person name="Xie G."/>
            <person name="Challacombe J.F."/>
            <person name="Altherr M.R."/>
            <person name="Bhotika S.S."/>
            <person name="Bruce D."/>
            <person name="Campbell C.S."/>
            <person name="Campbell M.L."/>
            <person name="Chen J."/>
            <person name="Chertkov O."/>
            <person name="Cleland C."/>
            <person name="Dimitrijevic M."/>
            <person name="Doggett N.A."/>
            <person name="Fawcett J.J."/>
            <person name="Glavina T."/>
            <person name="Goodwin L.A."/>
            <person name="Hill K.K."/>
            <person name="Hitchcock P."/>
            <person name="Jackson P.J."/>
            <person name="Keim P."/>
            <person name="Kewalramani A.R."/>
            <person name="Longmire J."/>
            <person name="Lucas S."/>
            <person name="Malfatti S."/>
            <person name="McMurry K."/>
            <person name="Meincke L.J."/>
            <person name="Misra M."/>
            <person name="Moseman B.L."/>
            <person name="Mundt M."/>
            <person name="Munk A.C."/>
            <person name="Okinaka R.T."/>
            <person name="Parson-Quintana B."/>
            <person name="Reilly L.P."/>
            <person name="Richardson P."/>
            <person name="Robinson D.L."/>
            <person name="Rubin E."/>
            <person name="Saunders E."/>
            <person name="Tapia R."/>
            <person name="Tesmer J.G."/>
            <person name="Thayer N."/>
            <person name="Thompson L.S."/>
            <person name="Tice H."/>
            <person name="Ticknor L.O."/>
            <person name="Wills P.L."/>
            <person name="Brettin T.S."/>
            <person name="Gilna P."/>
        </authorList>
    </citation>
    <scope>NUCLEOTIDE SEQUENCE [LARGE SCALE GENOMIC DNA]</scope>
    <source>
        <strain>97-27</strain>
    </source>
</reference>
<gene>
    <name type="ordered locus">BT9727_4425</name>
</gene>
<sequence length="270" mass="31041">MKMTSKKMKDELMKKLSRPEWDFHYDSEKEVLRIEQKDSKKGINVSLPGVVAKWEVNKEKAIEEVAYYVQEALIAMHKEENSAAKILPVIRSTSFPKQAEEGNPFIMTDHTAETRIYYALDSNKTYRLIDERLLQKLGLTEQQVREMALFNARSLSYEFKQDTVAGNTFYFLNTNDGYDATRILNESLLQSMREKISGDMVVAVPHQDVLIIADIVNEIGYDIIAQMTMKFFAEGHVPITSLSFVYEDGDFEPIFILAKNRKKTDGKEKG</sequence>
<evidence type="ECO:0000255" key="1">
    <source>
        <dbReference type="HAMAP-Rule" id="MF_01548"/>
    </source>
</evidence>